<proteinExistence type="inferred from homology"/>
<dbReference type="EMBL" id="AE017198">
    <property type="protein sequence ID" value="AAS08334.1"/>
    <property type="molecule type" value="Genomic_DNA"/>
</dbReference>
<dbReference type="RefSeq" id="WP_003647827.1">
    <property type="nucleotide sequence ID" value="NC_005362.1"/>
</dbReference>
<dbReference type="SMR" id="Q74L80"/>
<dbReference type="GeneID" id="83569763"/>
<dbReference type="KEGG" id="ljo:LJ_0347"/>
<dbReference type="eggNOG" id="COG0186">
    <property type="taxonomic scope" value="Bacteria"/>
</dbReference>
<dbReference type="HOGENOM" id="CLU_073626_1_0_9"/>
<dbReference type="Proteomes" id="UP000000581">
    <property type="component" value="Chromosome"/>
</dbReference>
<dbReference type="GO" id="GO:0022627">
    <property type="term" value="C:cytosolic small ribosomal subunit"/>
    <property type="evidence" value="ECO:0007669"/>
    <property type="project" value="TreeGrafter"/>
</dbReference>
<dbReference type="GO" id="GO:0019843">
    <property type="term" value="F:rRNA binding"/>
    <property type="evidence" value="ECO:0007669"/>
    <property type="project" value="UniProtKB-UniRule"/>
</dbReference>
<dbReference type="GO" id="GO:0003735">
    <property type="term" value="F:structural constituent of ribosome"/>
    <property type="evidence" value="ECO:0007669"/>
    <property type="project" value="InterPro"/>
</dbReference>
<dbReference type="GO" id="GO:0006412">
    <property type="term" value="P:translation"/>
    <property type="evidence" value="ECO:0007669"/>
    <property type="project" value="UniProtKB-UniRule"/>
</dbReference>
<dbReference type="CDD" id="cd00364">
    <property type="entry name" value="Ribosomal_uS17"/>
    <property type="match status" value="1"/>
</dbReference>
<dbReference type="Gene3D" id="2.40.50.140">
    <property type="entry name" value="Nucleic acid-binding proteins"/>
    <property type="match status" value="1"/>
</dbReference>
<dbReference type="HAMAP" id="MF_01345_B">
    <property type="entry name" value="Ribosomal_uS17_B"/>
    <property type="match status" value="1"/>
</dbReference>
<dbReference type="InterPro" id="IPR012340">
    <property type="entry name" value="NA-bd_OB-fold"/>
</dbReference>
<dbReference type="InterPro" id="IPR000266">
    <property type="entry name" value="Ribosomal_uS17"/>
</dbReference>
<dbReference type="InterPro" id="IPR019984">
    <property type="entry name" value="Ribosomal_uS17_bact/chlr"/>
</dbReference>
<dbReference type="InterPro" id="IPR019979">
    <property type="entry name" value="Ribosomal_uS17_CS"/>
</dbReference>
<dbReference type="NCBIfam" id="NF004123">
    <property type="entry name" value="PRK05610.1"/>
    <property type="match status" value="1"/>
</dbReference>
<dbReference type="NCBIfam" id="TIGR03635">
    <property type="entry name" value="uS17_bact"/>
    <property type="match status" value="1"/>
</dbReference>
<dbReference type="PANTHER" id="PTHR10744">
    <property type="entry name" value="40S RIBOSOMAL PROTEIN S11 FAMILY MEMBER"/>
    <property type="match status" value="1"/>
</dbReference>
<dbReference type="PANTHER" id="PTHR10744:SF1">
    <property type="entry name" value="SMALL RIBOSOMAL SUBUNIT PROTEIN US17M"/>
    <property type="match status" value="1"/>
</dbReference>
<dbReference type="Pfam" id="PF00366">
    <property type="entry name" value="Ribosomal_S17"/>
    <property type="match status" value="1"/>
</dbReference>
<dbReference type="PRINTS" id="PR00973">
    <property type="entry name" value="RIBOSOMALS17"/>
</dbReference>
<dbReference type="SUPFAM" id="SSF50249">
    <property type="entry name" value="Nucleic acid-binding proteins"/>
    <property type="match status" value="1"/>
</dbReference>
<dbReference type="PROSITE" id="PS00056">
    <property type="entry name" value="RIBOSOMAL_S17"/>
    <property type="match status" value="1"/>
</dbReference>
<organism>
    <name type="scientific">Lactobacillus johnsonii (strain CNCM I-12250 / La1 / NCC 533)</name>
    <dbReference type="NCBI Taxonomy" id="257314"/>
    <lineage>
        <taxon>Bacteria</taxon>
        <taxon>Bacillati</taxon>
        <taxon>Bacillota</taxon>
        <taxon>Bacilli</taxon>
        <taxon>Lactobacillales</taxon>
        <taxon>Lactobacillaceae</taxon>
        <taxon>Lactobacillus</taxon>
    </lineage>
</organism>
<protein>
    <recommendedName>
        <fullName evidence="1">Small ribosomal subunit protein uS17</fullName>
    </recommendedName>
    <alternativeName>
        <fullName evidence="2">30S ribosomal protein S17</fullName>
    </alternativeName>
</protein>
<gene>
    <name evidence="1" type="primary">rpsQ</name>
    <name type="ordered locus">LJ_0347</name>
</gene>
<reference key="1">
    <citation type="journal article" date="2004" name="Proc. Natl. Acad. Sci. U.S.A.">
        <title>The genome sequence of the probiotic intestinal bacterium Lactobacillus johnsonii NCC 533.</title>
        <authorList>
            <person name="Pridmore R.D."/>
            <person name="Berger B."/>
            <person name="Desiere F."/>
            <person name="Vilanova D."/>
            <person name="Barretto C."/>
            <person name="Pittet A.-C."/>
            <person name="Zwahlen M.-C."/>
            <person name="Rouvet M."/>
            <person name="Altermann E."/>
            <person name="Barrangou R."/>
            <person name="Mollet B."/>
            <person name="Mercenier A."/>
            <person name="Klaenhammer T."/>
            <person name="Arigoni F."/>
            <person name="Schell M.A."/>
        </authorList>
    </citation>
    <scope>NUCLEOTIDE SEQUENCE [LARGE SCALE GENOMIC DNA]</scope>
    <source>
        <strain>CNCM I-1225 / La1 / NCC 533</strain>
    </source>
</reference>
<feature type="chain" id="PRO_0000233491" description="Small ribosomal subunit protein uS17">
    <location>
        <begin position="1"/>
        <end position="88"/>
    </location>
</feature>
<sequence>MSETNERNNRHVYQGRVVSDKMDKTITVVVDTYKNHPVYKKRIKYSKKYYAHDENNEAKIGDTVRIMETRPLSHAKRYRLTKIVKKSI</sequence>
<name>RS17_LACJO</name>
<accession>Q74L80</accession>
<evidence type="ECO:0000255" key="1">
    <source>
        <dbReference type="HAMAP-Rule" id="MF_01345"/>
    </source>
</evidence>
<evidence type="ECO:0000305" key="2"/>
<keyword id="KW-0687">Ribonucleoprotein</keyword>
<keyword id="KW-0689">Ribosomal protein</keyword>
<keyword id="KW-0694">RNA-binding</keyword>
<keyword id="KW-0699">rRNA-binding</keyword>
<comment type="function">
    <text evidence="1">One of the primary rRNA binding proteins, it binds specifically to the 5'-end of 16S ribosomal RNA.</text>
</comment>
<comment type="subunit">
    <text evidence="1">Part of the 30S ribosomal subunit.</text>
</comment>
<comment type="similarity">
    <text evidence="1">Belongs to the universal ribosomal protein uS17 family.</text>
</comment>